<keyword id="KW-0539">Nucleus</keyword>
<keyword id="KW-1185">Reference proteome</keyword>
<keyword id="KW-0694">RNA-binding</keyword>
<keyword id="KW-0804">Transcription</keyword>
<keyword id="KW-0805">Transcription regulation</keyword>
<accession>Q9LHL3</accession>
<proteinExistence type="inferred from homology"/>
<protein>
    <recommendedName>
        <fullName>La-related protein 6C</fullName>
        <shortName>AtLARP6c</shortName>
    </recommendedName>
</protein>
<comment type="function">
    <text evidence="1">Transcriptional regulator.</text>
</comment>
<comment type="subcellular location">
    <subcellularLocation>
        <location evidence="1">Nucleus</location>
    </subcellularLocation>
</comment>
<dbReference type="EMBL" id="AP002041">
    <property type="protein sequence ID" value="BAB02607.1"/>
    <property type="molecule type" value="Genomic_DNA"/>
</dbReference>
<dbReference type="EMBL" id="CP002686">
    <property type="protein sequence ID" value="AEE76193.1"/>
    <property type="molecule type" value="Genomic_DNA"/>
</dbReference>
<dbReference type="RefSeq" id="NP_188540.1">
    <property type="nucleotide sequence ID" value="NM_112796.2"/>
</dbReference>
<dbReference type="SMR" id="Q9LHL3"/>
<dbReference type="BioGRID" id="6777">
    <property type="interactions" value="1"/>
</dbReference>
<dbReference type="FunCoup" id="Q9LHL3">
    <property type="interactions" value="295"/>
</dbReference>
<dbReference type="STRING" id="3702.Q9LHL3"/>
<dbReference type="PaxDb" id="3702-AT3G19090.1"/>
<dbReference type="ProteomicsDB" id="238632"/>
<dbReference type="EnsemblPlants" id="AT3G19090.1">
    <property type="protein sequence ID" value="AT3G19090.1"/>
    <property type="gene ID" value="AT3G19090"/>
</dbReference>
<dbReference type="GeneID" id="821444"/>
<dbReference type="Gramene" id="AT3G19090.1">
    <property type="protein sequence ID" value="AT3G19090.1"/>
    <property type="gene ID" value="AT3G19090"/>
</dbReference>
<dbReference type="KEGG" id="ath:AT3G19090"/>
<dbReference type="Araport" id="AT3G19090"/>
<dbReference type="TAIR" id="AT3G19090">
    <property type="gene designation" value="LARP6C"/>
</dbReference>
<dbReference type="eggNOG" id="KOG1855">
    <property type="taxonomic scope" value="Eukaryota"/>
</dbReference>
<dbReference type="HOGENOM" id="CLU_033595_0_0_1"/>
<dbReference type="InParanoid" id="Q9LHL3"/>
<dbReference type="OrthoDB" id="435402at2759"/>
<dbReference type="PhylomeDB" id="Q9LHL3"/>
<dbReference type="PRO" id="PR:Q9LHL3"/>
<dbReference type="Proteomes" id="UP000006548">
    <property type="component" value="Chromosome 3"/>
</dbReference>
<dbReference type="ExpressionAtlas" id="Q9LHL3">
    <property type="expression patterns" value="baseline and differential"/>
</dbReference>
<dbReference type="GO" id="GO:0005634">
    <property type="term" value="C:nucleus"/>
    <property type="evidence" value="ECO:0007669"/>
    <property type="project" value="UniProtKB-SubCell"/>
</dbReference>
<dbReference type="GO" id="GO:1990904">
    <property type="term" value="C:ribonucleoprotein complex"/>
    <property type="evidence" value="ECO:0007669"/>
    <property type="project" value="InterPro"/>
</dbReference>
<dbReference type="GO" id="GO:0003723">
    <property type="term" value="F:RNA binding"/>
    <property type="evidence" value="ECO:0007669"/>
    <property type="project" value="UniProtKB-KW"/>
</dbReference>
<dbReference type="GO" id="GO:0006396">
    <property type="term" value="P:RNA processing"/>
    <property type="evidence" value="ECO:0007669"/>
    <property type="project" value="InterPro"/>
</dbReference>
<dbReference type="CDD" id="cd08033">
    <property type="entry name" value="LARP_6"/>
    <property type="match status" value="1"/>
</dbReference>
<dbReference type="CDD" id="cd12288">
    <property type="entry name" value="RRM_La_like_plant"/>
    <property type="match status" value="1"/>
</dbReference>
<dbReference type="Gene3D" id="3.30.70.330">
    <property type="match status" value="1"/>
</dbReference>
<dbReference type="Gene3D" id="1.10.10.10">
    <property type="entry name" value="Winged helix-like DNA-binding domain superfamily/Winged helix DNA-binding domain"/>
    <property type="match status" value="1"/>
</dbReference>
<dbReference type="InterPro" id="IPR034878">
    <property type="entry name" value="La-rel_plant_RRM"/>
</dbReference>
<dbReference type="InterPro" id="IPR045180">
    <property type="entry name" value="La_dom_prot"/>
</dbReference>
<dbReference type="InterPro" id="IPR006630">
    <property type="entry name" value="La_HTH"/>
</dbReference>
<dbReference type="InterPro" id="IPR002344">
    <property type="entry name" value="Lupus_La"/>
</dbReference>
<dbReference type="InterPro" id="IPR012677">
    <property type="entry name" value="Nucleotide-bd_a/b_plait_sf"/>
</dbReference>
<dbReference type="InterPro" id="IPR009818">
    <property type="entry name" value="PAM2_motif"/>
</dbReference>
<dbReference type="InterPro" id="IPR035979">
    <property type="entry name" value="RBD_domain_sf"/>
</dbReference>
<dbReference type="InterPro" id="IPR000504">
    <property type="entry name" value="RRM_dom"/>
</dbReference>
<dbReference type="InterPro" id="IPR036388">
    <property type="entry name" value="WH-like_DNA-bd_sf"/>
</dbReference>
<dbReference type="InterPro" id="IPR036390">
    <property type="entry name" value="WH_DNA-bd_sf"/>
</dbReference>
<dbReference type="PANTHER" id="PTHR22792:SF62">
    <property type="entry name" value="LA-RELATED PROTEIN 7"/>
    <property type="match status" value="1"/>
</dbReference>
<dbReference type="PANTHER" id="PTHR22792">
    <property type="entry name" value="LUPUS LA PROTEIN-RELATED"/>
    <property type="match status" value="1"/>
</dbReference>
<dbReference type="Pfam" id="PF05383">
    <property type="entry name" value="La"/>
    <property type="match status" value="1"/>
</dbReference>
<dbReference type="Pfam" id="PF07145">
    <property type="entry name" value="PAM2"/>
    <property type="match status" value="1"/>
</dbReference>
<dbReference type="Pfam" id="PF00076">
    <property type="entry name" value="RRM_1"/>
    <property type="match status" value="1"/>
</dbReference>
<dbReference type="PRINTS" id="PR00302">
    <property type="entry name" value="LUPUSLA"/>
</dbReference>
<dbReference type="SMART" id="SM00715">
    <property type="entry name" value="LA"/>
    <property type="match status" value="1"/>
</dbReference>
<dbReference type="SMART" id="SM00360">
    <property type="entry name" value="RRM"/>
    <property type="match status" value="1"/>
</dbReference>
<dbReference type="SUPFAM" id="SSF54928">
    <property type="entry name" value="RNA-binding domain, RBD"/>
    <property type="match status" value="1"/>
</dbReference>
<dbReference type="SUPFAM" id="SSF46785">
    <property type="entry name" value="Winged helix' DNA-binding domain"/>
    <property type="match status" value="1"/>
</dbReference>
<dbReference type="PROSITE" id="PS50961">
    <property type="entry name" value="HTH_LA"/>
    <property type="match status" value="1"/>
</dbReference>
<dbReference type="PROSITE" id="PS50102">
    <property type="entry name" value="RRM"/>
    <property type="match status" value="1"/>
</dbReference>
<sequence>MAQMQREEVESVTTEKKRLDGGGGSSGAQATAFKFNAQAPEFVPRSHTTAPAPQVSPVSGYFYPCFHYNGGCIGGCGGGVCGGGGTGVGTQSSDWIYVGGGDPTAQHQHVHDPAAAFYISNPAVQFPASQNSSSSSKNLLSDDLRLKIVKQVEYQFTDMSLLANESISKHISKDPEGYVPVSYIASTKKIKALTSNHHLVSLALRSSSKLVVSEDGKKVKRTSQFTDRDREELQGRTVVAENLPDDHSYQNLEKIFGVVGNVKAIRICHPPESNSSRPKGDFLMSNKIHALIEYDNTVIADKAVEKLNDERNWRKGLRVRLLLRCSPKSVLKNRRNFDGILIDDELPSYESGEDSPRLHLTESQLDNDGDDNNVGGLWGKGRGKGRGRSPRSYAVGGGGRSFGIGLGVSLGIPSLGSHESSSPKTATKGPRMPDGTRGFTMGRGKPSISLSPNNL</sequence>
<organism>
    <name type="scientific">Arabidopsis thaliana</name>
    <name type="common">Mouse-ear cress</name>
    <dbReference type="NCBI Taxonomy" id="3702"/>
    <lineage>
        <taxon>Eukaryota</taxon>
        <taxon>Viridiplantae</taxon>
        <taxon>Streptophyta</taxon>
        <taxon>Embryophyta</taxon>
        <taxon>Tracheophyta</taxon>
        <taxon>Spermatophyta</taxon>
        <taxon>Magnoliopsida</taxon>
        <taxon>eudicotyledons</taxon>
        <taxon>Gunneridae</taxon>
        <taxon>Pentapetalae</taxon>
        <taxon>rosids</taxon>
        <taxon>malvids</taxon>
        <taxon>Brassicales</taxon>
        <taxon>Brassicaceae</taxon>
        <taxon>Camelineae</taxon>
        <taxon>Arabidopsis</taxon>
    </lineage>
</organism>
<evidence type="ECO:0000250" key="1"/>
<evidence type="ECO:0000255" key="2">
    <source>
        <dbReference type="PROSITE-ProRule" id="PRU00176"/>
    </source>
</evidence>
<evidence type="ECO:0000255" key="3">
    <source>
        <dbReference type="PROSITE-ProRule" id="PRU00332"/>
    </source>
</evidence>
<evidence type="ECO:0000256" key="4">
    <source>
        <dbReference type="SAM" id="MobiDB-lite"/>
    </source>
</evidence>
<reference key="1">
    <citation type="journal article" date="2000" name="DNA Res.">
        <title>Structural analysis of Arabidopsis thaliana chromosome 3. II. Sequence features of the 4,251,695 bp regions covered by 90 P1, TAC and BAC clones.</title>
        <authorList>
            <person name="Kaneko T."/>
            <person name="Katoh T."/>
            <person name="Sato S."/>
            <person name="Nakamura Y."/>
            <person name="Asamizu E."/>
            <person name="Tabata S."/>
        </authorList>
    </citation>
    <scope>NUCLEOTIDE SEQUENCE [LARGE SCALE GENOMIC DNA]</scope>
    <source>
        <strain>cv. Columbia</strain>
    </source>
</reference>
<reference key="2">
    <citation type="journal article" date="2017" name="Plant J.">
        <title>Araport11: a complete reannotation of the Arabidopsis thaliana reference genome.</title>
        <authorList>
            <person name="Cheng C.Y."/>
            <person name="Krishnakumar V."/>
            <person name="Chan A.P."/>
            <person name="Thibaud-Nissen F."/>
            <person name="Schobel S."/>
            <person name="Town C.D."/>
        </authorList>
    </citation>
    <scope>GENOME REANNOTATION</scope>
    <source>
        <strain>cv. Columbia</strain>
    </source>
</reference>
<reference key="3">
    <citation type="journal article" date="2009" name="RNA">
        <title>A comprehensive analysis of the La-motif protein superfamily.</title>
        <authorList>
            <person name="Bousquet-Antonelli C."/>
            <person name="Deragon J.M."/>
        </authorList>
    </citation>
    <scope>GENE FAMILY</scope>
    <scope>NOMENCLATURE</scope>
</reference>
<feature type="chain" id="PRO_0000428671" description="La-related protein 6C">
    <location>
        <begin position="1"/>
        <end position="455"/>
    </location>
</feature>
<feature type="domain" description="HTH La-type RNA-binding" evidence="3">
    <location>
        <begin position="138"/>
        <end position="229"/>
    </location>
</feature>
<feature type="domain" description="RRM" evidence="2">
    <location>
        <begin position="236"/>
        <end position="324"/>
    </location>
</feature>
<feature type="region of interest" description="Disordered" evidence="4">
    <location>
        <begin position="1"/>
        <end position="29"/>
    </location>
</feature>
<feature type="region of interest" description="Disordered" evidence="4">
    <location>
        <begin position="348"/>
        <end position="396"/>
    </location>
</feature>
<feature type="region of interest" description="Disordered" evidence="4">
    <location>
        <begin position="414"/>
        <end position="455"/>
    </location>
</feature>
<feature type="compositionally biased region" description="Basic and acidic residues" evidence="4">
    <location>
        <begin position="1"/>
        <end position="20"/>
    </location>
</feature>
<name>LRP6C_ARATH</name>
<gene>
    <name type="primary">LARP6C</name>
    <name type="ordered locus">At3g19090</name>
    <name type="ORF">MHP21.1</name>
</gene>